<sequence length="155" mass="17538">MTNIHYLPELEDSYSALNSDQIEILRQQVLNEGGEISSIQSRFNYAWGLVRSTNKEDQMLGVKLLTDIYKESPMRRRECLYYLTIGCYKLGEYSTAKRYVDALVHHEPENKQALMLQTAVENKITSQGLKGIALISAGIAIGATTIGLLIRGRRR</sequence>
<keyword id="KW-0472">Membrane</keyword>
<keyword id="KW-0496">Mitochondrion</keyword>
<keyword id="KW-1000">Mitochondrion outer membrane</keyword>
<keyword id="KW-1185">Reference proteome</keyword>
<keyword id="KW-0677">Repeat</keyword>
<keyword id="KW-0802">TPR repeat</keyword>
<keyword id="KW-0812">Transmembrane</keyword>
<keyword id="KW-1133">Transmembrane helix</keyword>
<dbReference type="EMBL" id="CR382123">
    <property type="protein sequence ID" value="CAH01403.1"/>
    <property type="molecule type" value="Genomic_DNA"/>
</dbReference>
<dbReference type="RefSeq" id="XP_452552.1">
    <property type="nucleotide sequence ID" value="XM_452552.1"/>
</dbReference>
<dbReference type="SMR" id="Q6CU37"/>
<dbReference type="FunCoup" id="Q6CU37">
    <property type="interactions" value="725"/>
</dbReference>
<dbReference type="STRING" id="284590.Q6CU37"/>
<dbReference type="PaxDb" id="284590-Q6CU37"/>
<dbReference type="KEGG" id="kla:KLLA0_C07909g"/>
<dbReference type="eggNOG" id="KOG3364">
    <property type="taxonomic scope" value="Eukaryota"/>
</dbReference>
<dbReference type="HOGENOM" id="CLU_104368_2_0_1"/>
<dbReference type="InParanoid" id="Q6CU37"/>
<dbReference type="OMA" id="QFNYAWG"/>
<dbReference type="Proteomes" id="UP000000598">
    <property type="component" value="Chromosome C"/>
</dbReference>
<dbReference type="GO" id="GO:0005741">
    <property type="term" value="C:mitochondrial outer membrane"/>
    <property type="evidence" value="ECO:0007669"/>
    <property type="project" value="UniProtKB-SubCell"/>
</dbReference>
<dbReference type="GO" id="GO:0005778">
    <property type="term" value="C:peroxisomal membrane"/>
    <property type="evidence" value="ECO:0007669"/>
    <property type="project" value="TreeGrafter"/>
</dbReference>
<dbReference type="GO" id="GO:0000422">
    <property type="term" value="P:autophagy of mitochondrion"/>
    <property type="evidence" value="ECO:0007669"/>
    <property type="project" value="TreeGrafter"/>
</dbReference>
<dbReference type="GO" id="GO:0000266">
    <property type="term" value="P:mitochondrial fission"/>
    <property type="evidence" value="ECO:0007669"/>
    <property type="project" value="InterPro"/>
</dbReference>
<dbReference type="GO" id="GO:0016559">
    <property type="term" value="P:peroxisome fission"/>
    <property type="evidence" value="ECO:0007669"/>
    <property type="project" value="TreeGrafter"/>
</dbReference>
<dbReference type="CDD" id="cd12212">
    <property type="entry name" value="Fis1"/>
    <property type="match status" value="1"/>
</dbReference>
<dbReference type="FunFam" id="1.25.40.10:FF:000481">
    <property type="entry name" value="Mitochondrial fission 1 protein"/>
    <property type="match status" value="1"/>
</dbReference>
<dbReference type="Gene3D" id="1.25.40.10">
    <property type="entry name" value="Tetratricopeptide repeat domain"/>
    <property type="match status" value="1"/>
</dbReference>
<dbReference type="InterPro" id="IPR016543">
    <property type="entry name" value="Fis1"/>
</dbReference>
<dbReference type="InterPro" id="IPR033745">
    <property type="entry name" value="Fis1_cytosol"/>
</dbReference>
<dbReference type="InterPro" id="IPR028061">
    <property type="entry name" value="Fis1_TPR_C"/>
</dbReference>
<dbReference type="InterPro" id="IPR028058">
    <property type="entry name" value="Fis1_TPR_N"/>
</dbReference>
<dbReference type="InterPro" id="IPR011990">
    <property type="entry name" value="TPR-like_helical_dom_sf"/>
</dbReference>
<dbReference type="PANTHER" id="PTHR13247:SF0">
    <property type="entry name" value="MITOCHONDRIAL FISSION 1 PROTEIN"/>
    <property type="match status" value="1"/>
</dbReference>
<dbReference type="PANTHER" id="PTHR13247">
    <property type="entry name" value="TETRATRICOPEPTIDE REPEAT PROTEIN 11 TPR REPEAT PROTEIN 11"/>
    <property type="match status" value="1"/>
</dbReference>
<dbReference type="Pfam" id="PF14853">
    <property type="entry name" value="Fis1_TPR_C"/>
    <property type="match status" value="1"/>
</dbReference>
<dbReference type="Pfam" id="PF14852">
    <property type="entry name" value="Fis1_TPR_N"/>
    <property type="match status" value="1"/>
</dbReference>
<dbReference type="PIRSF" id="PIRSF008835">
    <property type="entry name" value="TPR_repeat_11_Fis1"/>
    <property type="match status" value="1"/>
</dbReference>
<dbReference type="SUPFAM" id="SSF48452">
    <property type="entry name" value="TPR-like"/>
    <property type="match status" value="1"/>
</dbReference>
<gene>
    <name type="primary">FIS1</name>
    <name type="ordered locus">KLLA0C07909g</name>
</gene>
<reference key="1">
    <citation type="journal article" date="2004" name="Nature">
        <title>Genome evolution in yeasts.</title>
        <authorList>
            <person name="Dujon B."/>
            <person name="Sherman D."/>
            <person name="Fischer G."/>
            <person name="Durrens P."/>
            <person name="Casaregola S."/>
            <person name="Lafontaine I."/>
            <person name="de Montigny J."/>
            <person name="Marck C."/>
            <person name="Neuveglise C."/>
            <person name="Talla E."/>
            <person name="Goffard N."/>
            <person name="Frangeul L."/>
            <person name="Aigle M."/>
            <person name="Anthouard V."/>
            <person name="Babour A."/>
            <person name="Barbe V."/>
            <person name="Barnay S."/>
            <person name="Blanchin S."/>
            <person name="Beckerich J.-M."/>
            <person name="Beyne E."/>
            <person name="Bleykasten C."/>
            <person name="Boisrame A."/>
            <person name="Boyer J."/>
            <person name="Cattolico L."/>
            <person name="Confanioleri F."/>
            <person name="de Daruvar A."/>
            <person name="Despons L."/>
            <person name="Fabre E."/>
            <person name="Fairhead C."/>
            <person name="Ferry-Dumazet H."/>
            <person name="Groppi A."/>
            <person name="Hantraye F."/>
            <person name="Hennequin C."/>
            <person name="Jauniaux N."/>
            <person name="Joyet P."/>
            <person name="Kachouri R."/>
            <person name="Kerrest A."/>
            <person name="Koszul R."/>
            <person name="Lemaire M."/>
            <person name="Lesur I."/>
            <person name="Ma L."/>
            <person name="Muller H."/>
            <person name="Nicaud J.-M."/>
            <person name="Nikolski M."/>
            <person name="Oztas S."/>
            <person name="Ozier-Kalogeropoulos O."/>
            <person name="Pellenz S."/>
            <person name="Potier S."/>
            <person name="Richard G.-F."/>
            <person name="Straub M.-L."/>
            <person name="Suleau A."/>
            <person name="Swennen D."/>
            <person name="Tekaia F."/>
            <person name="Wesolowski-Louvel M."/>
            <person name="Westhof E."/>
            <person name="Wirth B."/>
            <person name="Zeniou-Meyer M."/>
            <person name="Zivanovic Y."/>
            <person name="Bolotin-Fukuhara M."/>
            <person name="Thierry A."/>
            <person name="Bouchier C."/>
            <person name="Caudron B."/>
            <person name="Scarpelli C."/>
            <person name="Gaillardin C."/>
            <person name="Weissenbach J."/>
            <person name="Wincker P."/>
            <person name="Souciet J.-L."/>
        </authorList>
    </citation>
    <scope>NUCLEOTIDE SEQUENCE [LARGE SCALE GENOMIC DNA]</scope>
    <source>
        <strain>ATCC 8585 / CBS 2359 / DSM 70799 / NBRC 1267 / NRRL Y-1140 / WM37</strain>
    </source>
</reference>
<comment type="function">
    <text evidence="1">Has a role in mitochondrial fission. Has a role in outer membrane fission but not matrix separation (By similarity).</text>
</comment>
<comment type="subcellular location">
    <subcellularLocation>
        <location evidence="1">Mitochondrion outer membrane</location>
        <topology evidence="1">Single-pass membrane protein</topology>
    </subcellularLocation>
</comment>
<comment type="domain">
    <text evidence="1">The C-terminus is required for mitochondrial localization, while the N-terminus is necessary for mitochondrial fission.</text>
</comment>
<comment type="similarity">
    <text evidence="3">Belongs to the FIS1 family.</text>
</comment>
<feature type="chain" id="PRO_0000256187" description="Mitochondrial fission 1 protein">
    <location>
        <begin position="1"/>
        <end position="155"/>
    </location>
</feature>
<feature type="topological domain" description="Cytoplasmic" evidence="2">
    <location>
        <begin position="1"/>
        <end position="130"/>
    </location>
</feature>
<feature type="transmembrane region" description="Helical" evidence="2">
    <location>
        <begin position="131"/>
        <end position="150"/>
    </location>
</feature>
<feature type="topological domain" description="Mitochondrial intermembrane" evidence="2">
    <location>
        <begin position="151"/>
        <end position="155"/>
    </location>
</feature>
<feature type="repeat" description="TPR">
    <location>
        <begin position="77"/>
        <end position="110"/>
    </location>
</feature>
<name>FIS1_KLULA</name>
<accession>Q6CU37</accession>
<proteinExistence type="inferred from homology"/>
<evidence type="ECO:0000250" key="1"/>
<evidence type="ECO:0000255" key="2"/>
<evidence type="ECO:0000305" key="3"/>
<protein>
    <recommendedName>
        <fullName>Mitochondrial fission 1 protein</fullName>
    </recommendedName>
</protein>
<organism>
    <name type="scientific">Kluyveromyces lactis (strain ATCC 8585 / CBS 2359 / DSM 70799 / NBRC 1267 / NRRL Y-1140 / WM37)</name>
    <name type="common">Yeast</name>
    <name type="synonym">Candida sphaerica</name>
    <dbReference type="NCBI Taxonomy" id="284590"/>
    <lineage>
        <taxon>Eukaryota</taxon>
        <taxon>Fungi</taxon>
        <taxon>Dikarya</taxon>
        <taxon>Ascomycota</taxon>
        <taxon>Saccharomycotina</taxon>
        <taxon>Saccharomycetes</taxon>
        <taxon>Saccharomycetales</taxon>
        <taxon>Saccharomycetaceae</taxon>
        <taxon>Kluyveromyces</taxon>
    </lineage>
</organism>